<proteinExistence type="inferred from homology"/>
<gene>
    <name evidence="1" type="primary">hisF</name>
    <name type="ordered locus">LBJ_1659</name>
</gene>
<sequence>MSNLTARVIPCLDIKDGRVVKGVNFVDLVDAGDPVESAGIYEENLADELCFLDITASSDRREILLHLVERIAEKIFIPFTVGGGIRTVADVKAVLEKGADKISINTAAFQNPELLTHSSEIYGSQCIVCAIDVKFQKERDRYEIFLHGGRTETGREALDWAREAVGRGAGEILLTSMDRDGTRNGFDINLLKSFSSSLEIPIIASGGAGNPEHMVEAILRGKADAVLAASIFHFGEYSIRETKRAMQEMGISVRLD</sequence>
<feature type="chain" id="PRO_1000063076" description="Imidazole glycerol phosphate synthase subunit HisF">
    <location>
        <begin position="1"/>
        <end position="256"/>
    </location>
</feature>
<feature type="active site" evidence="1">
    <location>
        <position position="13"/>
    </location>
</feature>
<feature type="active site" evidence="1">
    <location>
        <position position="132"/>
    </location>
</feature>
<dbReference type="EC" id="4.3.2.10" evidence="1"/>
<dbReference type="EMBL" id="CP000350">
    <property type="protein sequence ID" value="ABJ76214.1"/>
    <property type="molecule type" value="Genomic_DNA"/>
</dbReference>
<dbReference type="RefSeq" id="WP_002730840.1">
    <property type="nucleotide sequence ID" value="NC_008510.1"/>
</dbReference>
<dbReference type="SMR" id="Q04SA6"/>
<dbReference type="GeneID" id="61173819"/>
<dbReference type="KEGG" id="lbj:LBJ_1659"/>
<dbReference type="HOGENOM" id="CLU_048577_4_0_12"/>
<dbReference type="UniPathway" id="UPA00031">
    <property type="reaction ID" value="UER00010"/>
</dbReference>
<dbReference type="Proteomes" id="UP000000656">
    <property type="component" value="Chromosome 1"/>
</dbReference>
<dbReference type="GO" id="GO:0005737">
    <property type="term" value="C:cytoplasm"/>
    <property type="evidence" value="ECO:0007669"/>
    <property type="project" value="UniProtKB-SubCell"/>
</dbReference>
<dbReference type="GO" id="GO:0000107">
    <property type="term" value="F:imidazoleglycerol-phosphate synthase activity"/>
    <property type="evidence" value="ECO:0007669"/>
    <property type="project" value="UniProtKB-UniRule"/>
</dbReference>
<dbReference type="GO" id="GO:0016829">
    <property type="term" value="F:lyase activity"/>
    <property type="evidence" value="ECO:0007669"/>
    <property type="project" value="UniProtKB-KW"/>
</dbReference>
<dbReference type="GO" id="GO:0000105">
    <property type="term" value="P:L-histidine biosynthetic process"/>
    <property type="evidence" value="ECO:0007669"/>
    <property type="project" value="UniProtKB-UniRule"/>
</dbReference>
<dbReference type="CDD" id="cd04731">
    <property type="entry name" value="HisF"/>
    <property type="match status" value="1"/>
</dbReference>
<dbReference type="FunFam" id="3.20.20.70:FF:000006">
    <property type="entry name" value="Imidazole glycerol phosphate synthase subunit HisF"/>
    <property type="match status" value="1"/>
</dbReference>
<dbReference type="Gene3D" id="3.20.20.70">
    <property type="entry name" value="Aldolase class I"/>
    <property type="match status" value="1"/>
</dbReference>
<dbReference type="HAMAP" id="MF_01013">
    <property type="entry name" value="HisF"/>
    <property type="match status" value="1"/>
</dbReference>
<dbReference type="InterPro" id="IPR013785">
    <property type="entry name" value="Aldolase_TIM"/>
</dbReference>
<dbReference type="InterPro" id="IPR006062">
    <property type="entry name" value="His_biosynth"/>
</dbReference>
<dbReference type="InterPro" id="IPR004651">
    <property type="entry name" value="HisF"/>
</dbReference>
<dbReference type="InterPro" id="IPR050064">
    <property type="entry name" value="IGPS_HisA/HisF"/>
</dbReference>
<dbReference type="InterPro" id="IPR011060">
    <property type="entry name" value="RibuloseP-bd_barrel"/>
</dbReference>
<dbReference type="NCBIfam" id="TIGR00735">
    <property type="entry name" value="hisF"/>
    <property type="match status" value="1"/>
</dbReference>
<dbReference type="PANTHER" id="PTHR21235:SF2">
    <property type="entry name" value="IMIDAZOLE GLYCEROL PHOSPHATE SYNTHASE HISHF"/>
    <property type="match status" value="1"/>
</dbReference>
<dbReference type="PANTHER" id="PTHR21235">
    <property type="entry name" value="IMIDAZOLE GLYCEROL PHOSPHATE SYNTHASE SUBUNIT HISF/H IGP SYNTHASE SUBUNIT HISF/H"/>
    <property type="match status" value="1"/>
</dbReference>
<dbReference type="Pfam" id="PF00977">
    <property type="entry name" value="His_biosynth"/>
    <property type="match status" value="1"/>
</dbReference>
<dbReference type="SUPFAM" id="SSF51366">
    <property type="entry name" value="Ribulose-phoshate binding barrel"/>
    <property type="match status" value="1"/>
</dbReference>
<organism>
    <name type="scientific">Leptospira borgpetersenii serovar Hardjo-bovis (strain JB197)</name>
    <dbReference type="NCBI Taxonomy" id="355277"/>
    <lineage>
        <taxon>Bacteria</taxon>
        <taxon>Pseudomonadati</taxon>
        <taxon>Spirochaetota</taxon>
        <taxon>Spirochaetia</taxon>
        <taxon>Leptospirales</taxon>
        <taxon>Leptospiraceae</taxon>
        <taxon>Leptospira</taxon>
    </lineage>
</organism>
<evidence type="ECO:0000255" key="1">
    <source>
        <dbReference type="HAMAP-Rule" id="MF_01013"/>
    </source>
</evidence>
<accession>Q04SA6</accession>
<reference key="1">
    <citation type="journal article" date="2006" name="Proc. Natl. Acad. Sci. U.S.A.">
        <title>Genome reduction in Leptospira borgpetersenii reflects limited transmission potential.</title>
        <authorList>
            <person name="Bulach D.M."/>
            <person name="Zuerner R.L."/>
            <person name="Wilson P."/>
            <person name="Seemann T."/>
            <person name="McGrath A."/>
            <person name="Cullen P.A."/>
            <person name="Davis J."/>
            <person name="Johnson M."/>
            <person name="Kuczek E."/>
            <person name="Alt D.P."/>
            <person name="Peterson-Burch B."/>
            <person name="Coppel R.L."/>
            <person name="Rood J.I."/>
            <person name="Davies J.K."/>
            <person name="Adler B."/>
        </authorList>
    </citation>
    <scope>NUCLEOTIDE SEQUENCE [LARGE SCALE GENOMIC DNA]</scope>
    <source>
        <strain>JB197</strain>
    </source>
</reference>
<protein>
    <recommendedName>
        <fullName evidence="1">Imidazole glycerol phosphate synthase subunit HisF</fullName>
        <ecNumber evidence="1">4.3.2.10</ecNumber>
    </recommendedName>
    <alternativeName>
        <fullName evidence="1">IGP synthase cyclase subunit</fullName>
    </alternativeName>
    <alternativeName>
        <fullName evidence="1">IGP synthase subunit HisF</fullName>
    </alternativeName>
    <alternativeName>
        <fullName evidence="1">ImGP synthase subunit HisF</fullName>
        <shortName evidence="1">IGPS subunit HisF</shortName>
    </alternativeName>
</protein>
<comment type="function">
    <text evidence="1">IGPS catalyzes the conversion of PRFAR and glutamine to IGP, AICAR and glutamate. The HisF subunit catalyzes the cyclization activity that produces IGP and AICAR from PRFAR using the ammonia provided by the HisH subunit.</text>
</comment>
<comment type="catalytic activity">
    <reaction evidence="1">
        <text>5-[(5-phospho-1-deoxy-D-ribulos-1-ylimino)methylamino]-1-(5-phospho-beta-D-ribosyl)imidazole-4-carboxamide + L-glutamine = D-erythro-1-(imidazol-4-yl)glycerol 3-phosphate + 5-amino-1-(5-phospho-beta-D-ribosyl)imidazole-4-carboxamide + L-glutamate + H(+)</text>
        <dbReference type="Rhea" id="RHEA:24793"/>
        <dbReference type="ChEBI" id="CHEBI:15378"/>
        <dbReference type="ChEBI" id="CHEBI:29985"/>
        <dbReference type="ChEBI" id="CHEBI:58278"/>
        <dbReference type="ChEBI" id="CHEBI:58359"/>
        <dbReference type="ChEBI" id="CHEBI:58475"/>
        <dbReference type="ChEBI" id="CHEBI:58525"/>
        <dbReference type="EC" id="4.3.2.10"/>
    </reaction>
</comment>
<comment type="pathway">
    <text evidence="1">Amino-acid biosynthesis; L-histidine biosynthesis; L-histidine from 5-phospho-alpha-D-ribose 1-diphosphate: step 5/9.</text>
</comment>
<comment type="subunit">
    <text evidence="1">Heterodimer of HisH and HisF.</text>
</comment>
<comment type="subcellular location">
    <subcellularLocation>
        <location evidence="1">Cytoplasm</location>
    </subcellularLocation>
</comment>
<comment type="similarity">
    <text evidence="1">Belongs to the HisA/HisF family.</text>
</comment>
<keyword id="KW-0028">Amino-acid biosynthesis</keyword>
<keyword id="KW-0963">Cytoplasm</keyword>
<keyword id="KW-0368">Histidine biosynthesis</keyword>
<keyword id="KW-0456">Lyase</keyword>
<name>HIS6_LEPBJ</name>